<proteinExistence type="inferred from homology"/>
<gene>
    <name evidence="1" type="primary">rlmN</name>
    <name type="ordered locus">SPA0342</name>
</gene>
<evidence type="ECO:0000255" key="1">
    <source>
        <dbReference type="HAMAP-Rule" id="MF_01849"/>
    </source>
</evidence>
<evidence type="ECO:0000255" key="2">
    <source>
        <dbReference type="PROSITE-ProRule" id="PRU01266"/>
    </source>
</evidence>
<accession>Q5PNI4</accession>
<name>RLMN_SALPA</name>
<dbReference type="EC" id="2.1.1.192" evidence="1"/>
<dbReference type="EMBL" id="CP000026">
    <property type="protein sequence ID" value="AAV76359.1"/>
    <property type="molecule type" value="Genomic_DNA"/>
</dbReference>
<dbReference type="RefSeq" id="WP_000003206.1">
    <property type="nucleotide sequence ID" value="NC_006511.1"/>
</dbReference>
<dbReference type="SMR" id="Q5PNI4"/>
<dbReference type="KEGG" id="spt:SPA0342"/>
<dbReference type="HOGENOM" id="CLU_029101_0_0_6"/>
<dbReference type="Proteomes" id="UP000008185">
    <property type="component" value="Chromosome"/>
</dbReference>
<dbReference type="GO" id="GO:0005737">
    <property type="term" value="C:cytoplasm"/>
    <property type="evidence" value="ECO:0007669"/>
    <property type="project" value="UniProtKB-SubCell"/>
</dbReference>
<dbReference type="GO" id="GO:0051539">
    <property type="term" value="F:4 iron, 4 sulfur cluster binding"/>
    <property type="evidence" value="ECO:0007669"/>
    <property type="project" value="UniProtKB-UniRule"/>
</dbReference>
<dbReference type="GO" id="GO:0046872">
    <property type="term" value="F:metal ion binding"/>
    <property type="evidence" value="ECO:0007669"/>
    <property type="project" value="UniProtKB-KW"/>
</dbReference>
<dbReference type="GO" id="GO:0070040">
    <property type="term" value="F:rRNA (adenine(2503)-C2-)-methyltransferase activity"/>
    <property type="evidence" value="ECO:0007669"/>
    <property type="project" value="UniProtKB-UniRule"/>
</dbReference>
<dbReference type="GO" id="GO:0019843">
    <property type="term" value="F:rRNA binding"/>
    <property type="evidence" value="ECO:0007669"/>
    <property type="project" value="UniProtKB-UniRule"/>
</dbReference>
<dbReference type="GO" id="GO:0002935">
    <property type="term" value="F:tRNA (adenine(37)-C2)-methyltransferase activity"/>
    <property type="evidence" value="ECO:0007669"/>
    <property type="project" value="UniProtKB-UniRule"/>
</dbReference>
<dbReference type="GO" id="GO:0000049">
    <property type="term" value="F:tRNA binding"/>
    <property type="evidence" value="ECO:0007669"/>
    <property type="project" value="UniProtKB-UniRule"/>
</dbReference>
<dbReference type="GO" id="GO:0070475">
    <property type="term" value="P:rRNA base methylation"/>
    <property type="evidence" value="ECO:0007669"/>
    <property type="project" value="UniProtKB-UniRule"/>
</dbReference>
<dbReference type="GO" id="GO:0030488">
    <property type="term" value="P:tRNA methylation"/>
    <property type="evidence" value="ECO:0007669"/>
    <property type="project" value="UniProtKB-UniRule"/>
</dbReference>
<dbReference type="CDD" id="cd01335">
    <property type="entry name" value="Radical_SAM"/>
    <property type="match status" value="1"/>
</dbReference>
<dbReference type="FunFam" id="1.10.150.530:FF:000001">
    <property type="entry name" value="Dual-specificity RNA methyltransferase RlmN"/>
    <property type="match status" value="1"/>
</dbReference>
<dbReference type="FunFam" id="3.20.20.70:FF:000008">
    <property type="entry name" value="Dual-specificity RNA methyltransferase RlmN"/>
    <property type="match status" value="1"/>
</dbReference>
<dbReference type="Gene3D" id="1.10.150.530">
    <property type="match status" value="1"/>
</dbReference>
<dbReference type="Gene3D" id="3.20.20.70">
    <property type="entry name" value="Aldolase class I"/>
    <property type="match status" value="1"/>
</dbReference>
<dbReference type="HAMAP" id="MF_01849">
    <property type="entry name" value="RNA_methyltr_RlmN"/>
    <property type="match status" value="1"/>
</dbReference>
<dbReference type="InterPro" id="IPR013785">
    <property type="entry name" value="Aldolase_TIM"/>
</dbReference>
<dbReference type="InterPro" id="IPR040072">
    <property type="entry name" value="Methyltransferase_A"/>
</dbReference>
<dbReference type="InterPro" id="IPR048641">
    <property type="entry name" value="RlmN_N"/>
</dbReference>
<dbReference type="InterPro" id="IPR027492">
    <property type="entry name" value="RNA_MTrfase_RlmN"/>
</dbReference>
<dbReference type="InterPro" id="IPR004383">
    <property type="entry name" value="rRNA_lsu_MTrfase_RlmN/Cfr"/>
</dbReference>
<dbReference type="InterPro" id="IPR007197">
    <property type="entry name" value="rSAM"/>
</dbReference>
<dbReference type="NCBIfam" id="NF008396">
    <property type="entry name" value="PRK11194.1"/>
    <property type="match status" value="1"/>
</dbReference>
<dbReference type="NCBIfam" id="TIGR00048">
    <property type="entry name" value="rRNA_mod_RlmN"/>
    <property type="match status" value="1"/>
</dbReference>
<dbReference type="PANTHER" id="PTHR30544">
    <property type="entry name" value="23S RRNA METHYLTRANSFERASE"/>
    <property type="match status" value="1"/>
</dbReference>
<dbReference type="PANTHER" id="PTHR30544:SF5">
    <property type="entry name" value="RADICAL SAM CORE DOMAIN-CONTAINING PROTEIN"/>
    <property type="match status" value="1"/>
</dbReference>
<dbReference type="Pfam" id="PF04055">
    <property type="entry name" value="Radical_SAM"/>
    <property type="match status" value="1"/>
</dbReference>
<dbReference type="Pfam" id="PF21016">
    <property type="entry name" value="RlmN_N"/>
    <property type="match status" value="1"/>
</dbReference>
<dbReference type="PIRSF" id="PIRSF006004">
    <property type="entry name" value="CHP00048"/>
    <property type="match status" value="1"/>
</dbReference>
<dbReference type="SFLD" id="SFLDF00275">
    <property type="entry name" value="adenosine_C2_methyltransferase"/>
    <property type="match status" value="1"/>
</dbReference>
<dbReference type="SFLD" id="SFLDS00029">
    <property type="entry name" value="Radical_SAM"/>
    <property type="match status" value="1"/>
</dbReference>
<dbReference type="SUPFAM" id="SSF102114">
    <property type="entry name" value="Radical SAM enzymes"/>
    <property type="match status" value="1"/>
</dbReference>
<dbReference type="PROSITE" id="PS51918">
    <property type="entry name" value="RADICAL_SAM"/>
    <property type="match status" value="1"/>
</dbReference>
<comment type="function">
    <text evidence="1">Specifically methylates position 2 of adenine 2503 in 23S rRNA and position 2 of adenine 37 in tRNAs. m2A2503 modification seems to play a crucial role in the proofreading step occurring at the peptidyl transferase center and thus would serve to optimize ribosomal fidelity.</text>
</comment>
<comment type="catalytic activity">
    <reaction evidence="1">
        <text>adenosine(2503) in 23S rRNA + 2 reduced [2Fe-2S]-[ferredoxin] + 2 S-adenosyl-L-methionine = 2-methyladenosine(2503) in 23S rRNA + 5'-deoxyadenosine + L-methionine + 2 oxidized [2Fe-2S]-[ferredoxin] + S-adenosyl-L-homocysteine</text>
        <dbReference type="Rhea" id="RHEA:42916"/>
        <dbReference type="Rhea" id="RHEA-COMP:10000"/>
        <dbReference type="Rhea" id="RHEA-COMP:10001"/>
        <dbReference type="Rhea" id="RHEA-COMP:10152"/>
        <dbReference type="Rhea" id="RHEA-COMP:10282"/>
        <dbReference type="ChEBI" id="CHEBI:17319"/>
        <dbReference type="ChEBI" id="CHEBI:33737"/>
        <dbReference type="ChEBI" id="CHEBI:33738"/>
        <dbReference type="ChEBI" id="CHEBI:57844"/>
        <dbReference type="ChEBI" id="CHEBI:57856"/>
        <dbReference type="ChEBI" id="CHEBI:59789"/>
        <dbReference type="ChEBI" id="CHEBI:74411"/>
        <dbReference type="ChEBI" id="CHEBI:74497"/>
        <dbReference type="EC" id="2.1.1.192"/>
    </reaction>
</comment>
<comment type="catalytic activity">
    <reaction evidence="1">
        <text>adenosine(37) in tRNA + 2 reduced [2Fe-2S]-[ferredoxin] + 2 S-adenosyl-L-methionine = 2-methyladenosine(37) in tRNA + 5'-deoxyadenosine + L-methionine + 2 oxidized [2Fe-2S]-[ferredoxin] + S-adenosyl-L-homocysteine</text>
        <dbReference type="Rhea" id="RHEA:43332"/>
        <dbReference type="Rhea" id="RHEA-COMP:10000"/>
        <dbReference type="Rhea" id="RHEA-COMP:10001"/>
        <dbReference type="Rhea" id="RHEA-COMP:10162"/>
        <dbReference type="Rhea" id="RHEA-COMP:10485"/>
        <dbReference type="ChEBI" id="CHEBI:17319"/>
        <dbReference type="ChEBI" id="CHEBI:33737"/>
        <dbReference type="ChEBI" id="CHEBI:33738"/>
        <dbReference type="ChEBI" id="CHEBI:57844"/>
        <dbReference type="ChEBI" id="CHEBI:57856"/>
        <dbReference type="ChEBI" id="CHEBI:59789"/>
        <dbReference type="ChEBI" id="CHEBI:74411"/>
        <dbReference type="ChEBI" id="CHEBI:74497"/>
        <dbReference type="EC" id="2.1.1.192"/>
    </reaction>
</comment>
<comment type="cofactor">
    <cofactor evidence="1">
        <name>[4Fe-4S] cluster</name>
        <dbReference type="ChEBI" id="CHEBI:49883"/>
    </cofactor>
    <text evidence="1">Binds 1 [4Fe-4S] cluster. The cluster is coordinated with 3 cysteines and an exchangeable S-adenosyl-L-methionine.</text>
</comment>
<comment type="subcellular location">
    <subcellularLocation>
        <location evidence="1">Cytoplasm</location>
    </subcellularLocation>
</comment>
<comment type="miscellaneous">
    <text evidence="1">Reaction proceeds by a ping-pong mechanism involving intermediate methylation of a conserved cysteine residue.</text>
</comment>
<comment type="similarity">
    <text evidence="1">Belongs to the radical SAM superfamily. RlmN family.</text>
</comment>
<protein>
    <recommendedName>
        <fullName evidence="1">Dual-specificity RNA methyltransferase RlmN</fullName>
        <ecNumber evidence="1">2.1.1.192</ecNumber>
    </recommendedName>
    <alternativeName>
        <fullName evidence="1">23S rRNA (adenine(2503)-C(2))-methyltransferase</fullName>
    </alternativeName>
    <alternativeName>
        <fullName evidence="1">23S rRNA m2A2503 methyltransferase</fullName>
    </alternativeName>
    <alternativeName>
        <fullName evidence="1">Ribosomal RNA large subunit methyltransferase N</fullName>
    </alternativeName>
    <alternativeName>
        <fullName evidence="1">tRNA (adenine(37)-C(2))-methyltransferase</fullName>
    </alternativeName>
    <alternativeName>
        <fullName evidence="1">tRNA m2A37 methyltransferase</fullName>
    </alternativeName>
</protein>
<keyword id="KW-0004">4Fe-4S</keyword>
<keyword id="KW-0963">Cytoplasm</keyword>
<keyword id="KW-1015">Disulfide bond</keyword>
<keyword id="KW-0408">Iron</keyword>
<keyword id="KW-0411">Iron-sulfur</keyword>
<keyword id="KW-0479">Metal-binding</keyword>
<keyword id="KW-0489">Methyltransferase</keyword>
<keyword id="KW-0698">rRNA processing</keyword>
<keyword id="KW-0949">S-adenosyl-L-methionine</keyword>
<keyword id="KW-0808">Transferase</keyword>
<keyword id="KW-0819">tRNA processing</keyword>
<reference key="1">
    <citation type="journal article" date="2004" name="Nat. Genet.">
        <title>Comparison of genome degradation in Paratyphi A and Typhi, human-restricted serovars of Salmonella enterica that cause typhoid.</title>
        <authorList>
            <person name="McClelland M."/>
            <person name="Sanderson K.E."/>
            <person name="Clifton S.W."/>
            <person name="Latreille P."/>
            <person name="Porwollik S."/>
            <person name="Sabo A."/>
            <person name="Meyer R."/>
            <person name="Bieri T."/>
            <person name="Ozersky P."/>
            <person name="McLellan M."/>
            <person name="Harkins C.R."/>
            <person name="Wang C."/>
            <person name="Nguyen C."/>
            <person name="Berghoff A."/>
            <person name="Elliott G."/>
            <person name="Kohlberg S."/>
            <person name="Strong C."/>
            <person name="Du F."/>
            <person name="Carter J."/>
            <person name="Kremizki C."/>
            <person name="Layman D."/>
            <person name="Leonard S."/>
            <person name="Sun H."/>
            <person name="Fulton L."/>
            <person name="Nash W."/>
            <person name="Miner T."/>
            <person name="Minx P."/>
            <person name="Delehaunty K."/>
            <person name="Fronick C."/>
            <person name="Magrini V."/>
            <person name="Nhan M."/>
            <person name="Warren W."/>
            <person name="Florea L."/>
            <person name="Spieth J."/>
            <person name="Wilson R.K."/>
        </authorList>
    </citation>
    <scope>NUCLEOTIDE SEQUENCE [LARGE SCALE GENOMIC DNA]</scope>
    <source>
        <strain>ATCC 9150 / SARB42</strain>
    </source>
</reference>
<feature type="chain" id="PRO_0000350387" description="Dual-specificity RNA methyltransferase RlmN">
    <location>
        <begin position="1"/>
        <end position="388"/>
    </location>
</feature>
<feature type="domain" description="Radical SAM core" evidence="2">
    <location>
        <begin position="115"/>
        <end position="354"/>
    </location>
</feature>
<feature type="active site" description="Proton acceptor" evidence="1">
    <location>
        <position position="109"/>
    </location>
</feature>
<feature type="active site" description="S-methylcysteine intermediate" evidence="1">
    <location>
        <position position="359"/>
    </location>
</feature>
<feature type="binding site" evidence="1">
    <location>
        <position position="129"/>
    </location>
    <ligand>
        <name>[4Fe-4S] cluster</name>
        <dbReference type="ChEBI" id="CHEBI:49883"/>
        <note>4Fe-4S-S-AdoMet</note>
    </ligand>
</feature>
<feature type="binding site" evidence="1">
    <location>
        <position position="133"/>
    </location>
    <ligand>
        <name>[4Fe-4S] cluster</name>
        <dbReference type="ChEBI" id="CHEBI:49883"/>
        <note>4Fe-4S-S-AdoMet</note>
    </ligand>
</feature>
<feature type="binding site" evidence="1">
    <location>
        <position position="136"/>
    </location>
    <ligand>
        <name>[4Fe-4S] cluster</name>
        <dbReference type="ChEBI" id="CHEBI:49883"/>
        <note>4Fe-4S-S-AdoMet</note>
    </ligand>
</feature>
<feature type="binding site" evidence="1">
    <location>
        <begin position="183"/>
        <end position="184"/>
    </location>
    <ligand>
        <name>S-adenosyl-L-methionine</name>
        <dbReference type="ChEBI" id="CHEBI:59789"/>
    </ligand>
</feature>
<feature type="binding site" evidence="1">
    <location>
        <position position="215"/>
    </location>
    <ligand>
        <name>S-adenosyl-L-methionine</name>
        <dbReference type="ChEBI" id="CHEBI:59789"/>
    </ligand>
</feature>
<feature type="binding site" evidence="1">
    <location>
        <begin position="237"/>
        <end position="239"/>
    </location>
    <ligand>
        <name>S-adenosyl-L-methionine</name>
        <dbReference type="ChEBI" id="CHEBI:59789"/>
    </ligand>
</feature>
<feature type="binding site" evidence="1">
    <location>
        <position position="316"/>
    </location>
    <ligand>
        <name>S-adenosyl-L-methionine</name>
        <dbReference type="ChEBI" id="CHEBI:59789"/>
    </ligand>
</feature>
<feature type="disulfide bond" description="(transient)" evidence="1">
    <location>
        <begin position="122"/>
        <end position="359"/>
    </location>
</feature>
<organism>
    <name type="scientific">Salmonella paratyphi A (strain ATCC 9150 / SARB42)</name>
    <dbReference type="NCBI Taxonomy" id="295319"/>
    <lineage>
        <taxon>Bacteria</taxon>
        <taxon>Pseudomonadati</taxon>
        <taxon>Pseudomonadota</taxon>
        <taxon>Gammaproteobacteria</taxon>
        <taxon>Enterobacterales</taxon>
        <taxon>Enterobacteriaceae</taxon>
        <taxon>Salmonella</taxon>
    </lineage>
</organism>
<sequence length="388" mass="43512">MSEQIVTPESSTPVVLNNETKINLLDLNRQQMREFFKNLGEKPFRADQVMKWMYHYCCDNFDEMTDINKVLRGKLKEVAEIRAPEVVEEQRSSDGTIKWAIAVGDQRVETVYIPEDDRATLCVSSQVGCALECKFCSTAQQGFNRNLRVSEIIGQVWRAAKIVGAAKVTGQRPITNVVMMGMGEPLLNLTNVVPAMEIMLDDFGFGLSKRRVTLSTSGVVPALDKLGDMIDVALAISLHAPNDTIRDEIVPINKKYNIETFLGAVRRYLEKSNANQGRVTIEYVMLDHVNDGTEHAHQLAELLKETPCKINLIPWNPFPGAPYGRSSNSRIDRFSKVLMSYGFTTIVRKTRGDDIDAACGQLAGDVIDRTKRTLRKRMQGEVIDIKAI</sequence>